<proteinExistence type="inferred from homology"/>
<evidence type="ECO:0000255" key="1">
    <source>
        <dbReference type="HAMAP-Rule" id="MF_01365"/>
    </source>
</evidence>
<evidence type="ECO:0000305" key="2"/>
<reference key="1">
    <citation type="submission" date="2008-05" db="EMBL/GenBank/DDBJ databases">
        <title>Complete sequence of chromosome 1 of Ralstonia pickettii 12J.</title>
        <authorList>
            <person name="Lucas S."/>
            <person name="Copeland A."/>
            <person name="Lapidus A."/>
            <person name="Glavina del Rio T."/>
            <person name="Dalin E."/>
            <person name="Tice H."/>
            <person name="Bruce D."/>
            <person name="Goodwin L."/>
            <person name="Pitluck S."/>
            <person name="Meincke L."/>
            <person name="Brettin T."/>
            <person name="Detter J.C."/>
            <person name="Han C."/>
            <person name="Kuske C.R."/>
            <person name="Schmutz J."/>
            <person name="Larimer F."/>
            <person name="Land M."/>
            <person name="Hauser L."/>
            <person name="Kyrpides N."/>
            <person name="Mikhailova N."/>
            <person name="Marsh T."/>
            <person name="Richardson P."/>
        </authorList>
    </citation>
    <scope>NUCLEOTIDE SEQUENCE [LARGE SCALE GENOMIC DNA]</scope>
    <source>
        <strain>12J</strain>
    </source>
</reference>
<sequence length="177" mass="18950">MSRVGKAPIALPKGAEVNFAGGLLTVKGPLGTLTQPIHSLVKVNTDNGTITFAPADESREANALQGTMRALTANMVKGVTTGFERKLNLVGVGYRASVQGTALKLQLGFSHDVIHEMPEGVKAETPTQTEIIIKGSDKQKVGQVAAEVRGYRPPEPYKGKGVRYADERVILKETKKK</sequence>
<accession>B2UEK4</accession>
<name>RL6_RALPJ</name>
<comment type="function">
    <text evidence="1">This protein binds to the 23S rRNA, and is important in its secondary structure. It is located near the subunit interface in the base of the L7/L12 stalk, and near the tRNA binding site of the peptidyltransferase center.</text>
</comment>
<comment type="subunit">
    <text evidence="1">Part of the 50S ribosomal subunit.</text>
</comment>
<comment type="similarity">
    <text evidence="1">Belongs to the universal ribosomal protein uL6 family.</text>
</comment>
<dbReference type="EMBL" id="CP001068">
    <property type="protein sequence ID" value="ACD28404.1"/>
    <property type="molecule type" value="Genomic_DNA"/>
</dbReference>
<dbReference type="SMR" id="B2UEK4"/>
<dbReference type="STRING" id="402626.Rpic_3282"/>
<dbReference type="KEGG" id="rpi:Rpic_3282"/>
<dbReference type="eggNOG" id="COG0097">
    <property type="taxonomic scope" value="Bacteria"/>
</dbReference>
<dbReference type="HOGENOM" id="CLU_065464_1_2_4"/>
<dbReference type="GO" id="GO:0022625">
    <property type="term" value="C:cytosolic large ribosomal subunit"/>
    <property type="evidence" value="ECO:0007669"/>
    <property type="project" value="TreeGrafter"/>
</dbReference>
<dbReference type="GO" id="GO:0019843">
    <property type="term" value="F:rRNA binding"/>
    <property type="evidence" value="ECO:0007669"/>
    <property type="project" value="UniProtKB-UniRule"/>
</dbReference>
<dbReference type="GO" id="GO:0003735">
    <property type="term" value="F:structural constituent of ribosome"/>
    <property type="evidence" value="ECO:0007669"/>
    <property type="project" value="InterPro"/>
</dbReference>
<dbReference type="GO" id="GO:0002181">
    <property type="term" value="P:cytoplasmic translation"/>
    <property type="evidence" value="ECO:0007669"/>
    <property type="project" value="TreeGrafter"/>
</dbReference>
<dbReference type="FunFam" id="3.90.930.12:FF:000001">
    <property type="entry name" value="50S ribosomal protein L6"/>
    <property type="match status" value="1"/>
</dbReference>
<dbReference type="FunFam" id="3.90.930.12:FF:000002">
    <property type="entry name" value="50S ribosomal protein L6"/>
    <property type="match status" value="1"/>
</dbReference>
<dbReference type="Gene3D" id="3.90.930.12">
    <property type="entry name" value="Ribosomal protein L6, alpha-beta domain"/>
    <property type="match status" value="2"/>
</dbReference>
<dbReference type="HAMAP" id="MF_01365_B">
    <property type="entry name" value="Ribosomal_uL6_B"/>
    <property type="match status" value="1"/>
</dbReference>
<dbReference type="InterPro" id="IPR000702">
    <property type="entry name" value="Ribosomal_uL6-like"/>
</dbReference>
<dbReference type="InterPro" id="IPR036789">
    <property type="entry name" value="Ribosomal_uL6-like_a/b-dom_sf"/>
</dbReference>
<dbReference type="InterPro" id="IPR020040">
    <property type="entry name" value="Ribosomal_uL6_a/b-dom"/>
</dbReference>
<dbReference type="InterPro" id="IPR019906">
    <property type="entry name" value="Ribosomal_uL6_bac-type"/>
</dbReference>
<dbReference type="InterPro" id="IPR002358">
    <property type="entry name" value="Ribosomal_uL6_CS"/>
</dbReference>
<dbReference type="NCBIfam" id="TIGR03654">
    <property type="entry name" value="L6_bact"/>
    <property type="match status" value="1"/>
</dbReference>
<dbReference type="PANTHER" id="PTHR11655">
    <property type="entry name" value="60S/50S RIBOSOMAL PROTEIN L6/L9"/>
    <property type="match status" value="1"/>
</dbReference>
<dbReference type="PANTHER" id="PTHR11655:SF14">
    <property type="entry name" value="LARGE RIBOSOMAL SUBUNIT PROTEIN UL6M"/>
    <property type="match status" value="1"/>
</dbReference>
<dbReference type="Pfam" id="PF00347">
    <property type="entry name" value="Ribosomal_L6"/>
    <property type="match status" value="2"/>
</dbReference>
<dbReference type="PIRSF" id="PIRSF002162">
    <property type="entry name" value="Ribosomal_L6"/>
    <property type="match status" value="1"/>
</dbReference>
<dbReference type="PRINTS" id="PR00059">
    <property type="entry name" value="RIBOSOMALL6"/>
</dbReference>
<dbReference type="SUPFAM" id="SSF56053">
    <property type="entry name" value="Ribosomal protein L6"/>
    <property type="match status" value="2"/>
</dbReference>
<dbReference type="PROSITE" id="PS00525">
    <property type="entry name" value="RIBOSOMAL_L6_1"/>
    <property type="match status" value="1"/>
</dbReference>
<protein>
    <recommendedName>
        <fullName evidence="1">Large ribosomal subunit protein uL6</fullName>
    </recommendedName>
    <alternativeName>
        <fullName evidence="2">50S ribosomal protein L6</fullName>
    </alternativeName>
</protein>
<gene>
    <name evidence="1" type="primary">rplF</name>
    <name type="ordered locus">Rpic_3282</name>
</gene>
<keyword id="KW-0687">Ribonucleoprotein</keyword>
<keyword id="KW-0689">Ribosomal protein</keyword>
<keyword id="KW-0694">RNA-binding</keyword>
<keyword id="KW-0699">rRNA-binding</keyword>
<feature type="chain" id="PRO_1000144034" description="Large ribosomal subunit protein uL6">
    <location>
        <begin position="1"/>
        <end position="177"/>
    </location>
</feature>
<organism>
    <name type="scientific">Ralstonia pickettii (strain 12J)</name>
    <dbReference type="NCBI Taxonomy" id="402626"/>
    <lineage>
        <taxon>Bacteria</taxon>
        <taxon>Pseudomonadati</taxon>
        <taxon>Pseudomonadota</taxon>
        <taxon>Betaproteobacteria</taxon>
        <taxon>Burkholderiales</taxon>
        <taxon>Burkholderiaceae</taxon>
        <taxon>Ralstonia</taxon>
    </lineage>
</organism>